<proteinExistence type="inferred from homology"/>
<name>MOAA_RHILW</name>
<accession>B5ZRM8</accession>
<comment type="function">
    <text evidence="1">Catalyzes the cyclization of GTP to (8S)-3',8-cyclo-7,8-dihydroguanosine 5'-triphosphate.</text>
</comment>
<comment type="catalytic activity">
    <reaction evidence="1">
        <text>GTP + AH2 + S-adenosyl-L-methionine = (8S)-3',8-cyclo-7,8-dihydroguanosine 5'-triphosphate + 5'-deoxyadenosine + L-methionine + A + H(+)</text>
        <dbReference type="Rhea" id="RHEA:49576"/>
        <dbReference type="ChEBI" id="CHEBI:13193"/>
        <dbReference type="ChEBI" id="CHEBI:15378"/>
        <dbReference type="ChEBI" id="CHEBI:17319"/>
        <dbReference type="ChEBI" id="CHEBI:17499"/>
        <dbReference type="ChEBI" id="CHEBI:37565"/>
        <dbReference type="ChEBI" id="CHEBI:57844"/>
        <dbReference type="ChEBI" id="CHEBI:59789"/>
        <dbReference type="ChEBI" id="CHEBI:131766"/>
        <dbReference type="EC" id="4.1.99.22"/>
    </reaction>
</comment>
<comment type="cofactor">
    <cofactor evidence="1">
        <name>[4Fe-4S] cluster</name>
        <dbReference type="ChEBI" id="CHEBI:49883"/>
    </cofactor>
    <text evidence="1">Binds 2 [4Fe-4S] clusters. Binds 1 [4Fe-4S] cluster coordinated with 3 cysteines and an exchangeable S-adenosyl-L-methionine and 1 [4Fe-4S] cluster coordinated with 3 cysteines and the GTP-derived substrate.</text>
</comment>
<comment type="pathway">
    <text evidence="1">Cofactor biosynthesis; molybdopterin biosynthesis.</text>
</comment>
<comment type="subunit">
    <text evidence="1">Monomer and homodimer.</text>
</comment>
<comment type="similarity">
    <text evidence="1">Belongs to the radical SAM superfamily. MoaA family.</text>
</comment>
<sequence length="348" mass="38780">MNTRVGTIGNASLLTADAHPMIDPFGRAVTYLRVSVTDRCDFRCTYCMAENMTFLPKKDLLTLEELDRLCSAFVAKGVKKIRLTGGEPLVRKNIMYLVRRLGEKIGAGLDEVTLTTNGSQLSRHAEELYDCGVRRINVSLDTLDPDKFRKITRWGDFAKVMEGIDAAQKAGIKIKLNAVALKDFNDAEMPEIMRFAHGRGMDLTVIETMPMGEIDEDRTDQYLPLSKLRADLEKQFTLTDIDYQTGGPARYVRVAETGGRLGFITPMTHNFCESCNRVRLTCTGTLYMCLGQNDAADLRAALRATEDDALLHAAIDEAITRKPKGHDFIIDRTHNRPAVARHMSVTGG</sequence>
<keyword id="KW-0004">4Fe-4S</keyword>
<keyword id="KW-0342">GTP-binding</keyword>
<keyword id="KW-0408">Iron</keyword>
<keyword id="KW-0411">Iron-sulfur</keyword>
<keyword id="KW-0456">Lyase</keyword>
<keyword id="KW-0479">Metal-binding</keyword>
<keyword id="KW-0501">Molybdenum cofactor biosynthesis</keyword>
<keyword id="KW-0547">Nucleotide-binding</keyword>
<keyword id="KW-1185">Reference proteome</keyword>
<keyword id="KW-0949">S-adenosyl-L-methionine</keyword>
<evidence type="ECO:0000255" key="1">
    <source>
        <dbReference type="HAMAP-Rule" id="MF_01225"/>
    </source>
</evidence>
<evidence type="ECO:0000255" key="2">
    <source>
        <dbReference type="PROSITE-ProRule" id="PRU01266"/>
    </source>
</evidence>
<protein>
    <recommendedName>
        <fullName evidence="1">GTP 3',8-cyclase</fullName>
        <ecNumber evidence="1">4.1.99.22</ecNumber>
    </recommendedName>
    <alternativeName>
        <fullName evidence="1">Molybdenum cofactor biosynthesis protein A</fullName>
    </alternativeName>
</protein>
<gene>
    <name evidence="1" type="primary">moaA</name>
    <name type="ordered locus">Rleg2_2025</name>
</gene>
<organism>
    <name type="scientific">Rhizobium leguminosarum bv. trifolii (strain WSM2304)</name>
    <dbReference type="NCBI Taxonomy" id="395492"/>
    <lineage>
        <taxon>Bacteria</taxon>
        <taxon>Pseudomonadati</taxon>
        <taxon>Pseudomonadota</taxon>
        <taxon>Alphaproteobacteria</taxon>
        <taxon>Hyphomicrobiales</taxon>
        <taxon>Rhizobiaceae</taxon>
        <taxon>Rhizobium/Agrobacterium group</taxon>
        <taxon>Rhizobium</taxon>
    </lineage>
</organism>
<reference key="1">
    <citation type="journal article" date="2010" name="Stand. Genomic Sci.">
        <title>Complete genome sequence of Rhizobium leguminosarum bv trifolii strain WSM2304, an effective microsymbiont of the South American clover Trifolium polymorphum.</title>
        <authorList>
            <person name="Reeve W."/>
            <person name="O'Hara G."/>
            <person name="Chain P."/>
            <person name="Ardley J."/>
            <person name="Brau L."/>
            <person name="Nandesena K."/>
            <person name="Tiwari R."/>
            <person name="Malfatti S."/>
            <person name="Kiss H."/>
            <person name="Lapidus A."/>
            <person name="Copeland A."/>
            <person name="Nolan M."/>
            <person name="Land M."/>
            <person name="Ivanova N."/>
            <person name="Mavromatis K."/>
            <person name="Markowitz V."/>
            <person name="Kyrpides N."/>
            <person name="Melino V."/>
            <person name="Denton M."/>
            <person name="Yates R."/>
            <person name="Howieson J."/>
        </authorList>
    </citation>
    <scope>NUCLEOTIDE SEQUENCE [LARGE SCALE GENOMIC DNA]</scope>
    <source>
        <strain>WSM2304</strain>
    </source>
</reference>
<dbReference type="EC" id="4.1.99.22" evidence="1"/>
<dbReference type="EMBL" id="CP001191">
    <property type="protein sequence ID" value="ACI55309.1"/>
    <property type="molecule type" value="Genomic_DNA"/>
</dbReference>
<dbReference type="RefSeq" id="WP_012557881.1">
    <property type="nucleotide sequence ID" value="NC_011369.1"/>
</dbReference>
<dbReference type="SMR" id="B5ZRM8"/>
<dbReference type="STRING" id="395492.Rleg2_2025"/>
<dbReference type="KEGG" id="rlt:Rleg2_2025"/>
<dbReference type="eggNOG" id="COG2896">
    <property type="taxonomic scope" value="Bacteria"/>
</dbReference>
<dbReference type="HOGENOM" id="CLU_009273_0_1_5"/>
<dbReference type="UniPathway" id="UPA00344"/>
<dbReference type="Proteomes" id="UP000008330">
    <property type="component" value="Chromosome"/>
</dbReference>
<dbReference type="GO" id="GO:0051539">
    <property type="term" value="F:4 iron, 4 sulfur cluster binding"/>
    <property type="evidence" value="ECO:0007669"/>
    <property type="project" value="UniProtKB-UniRule"/>
</dbReference>
<dbReference type="GO" id="GO:0061799">
    <property type="term" value="F:cyclic pyranopterin monophosphate synthase activity"/>
    <property type="evidence" value="ECO:0007669"/>
    <property type="project" value="TreeGrafter"/>
</dbReference>
<dbReference type="GO" id="GO:0061798">
    <property type="term" value="F:GTP 3',8'-cyclase activity"/>
    <property type="evidence" value="ECO:0007669"/>
    <property type="project" value="UniProtKB-UniRule"/>
</dbReference>
<dbReference type="GO" id="GO:0005525">
    <property type="term" value="F:GTP binding"/>
    <property type="evidence" value="ECO:0007669"/>
    <property type="project" value="UniProtKB-UniRule"/>
</dbReference>
<dbReference type="GO" id="GO:0046872">
    <property type="term" value="F:metal ion binding"/>
    <property type="evidence" value="ECO:0007669"/>
    <property type="project" value="UniProtKB-KW"/>
</dbReference>
<dbReference type="GO" id="GO:1904047">
    <property type="term" value="F:S-adenosyl-L-methionine binding"/>
    <property type="evidence" value="ECO:0007669"/>
    <property type="project" value="UniProtKB-UniRule"/>
</dbReference>
<dbReference type="GO" id="GO:0006777">
    <property type="term" value="P:Mo-molybdopterin cofactor biosynthetic process"/>
    <property type="evidence" value="ECO:0007669"/>
    <property type="project" value="UniProtKB-UniRule"/>
</dbReference>
<dbReference type="CDD" id="cd01335">
    <property type="entry name" value="Radical_SAM"/>
    <property type="match status" value="1"/>
</dbReference>
<dbReference type="CDD" id="cd21117">
    <property type="entry name" value="Twitch_MoaA"/>
    <property type="match status" value="1"/>
</dbReference>
<dbReference type="Gene3D" id="3.20.20.70">
    <property type="entry name" value="Aldolase class I"/>
    <property type="match status" value="1"/>
</dbReference>
<dbReference type="HAMAP" id="MF_01225_B">
    <property type="entry name" value="MoaA_B"/>
    <property type="match status" value="1"/>
</dbReference>
<dbReference type="InterPro" id="IPR013785">
    <property type="entry name" value="Aldolase_TIM"/>
</dbReference>
<dbReference type="InterPro" id="IPR006638">
    <property type="entry name" value="Elp3/MiaA/NifB-like_rSAM"/>
</dbReference>
<dbReference type="InterPro" id="IPR013483">
    <property type="entry name" value="MoaA"/>
</dbReference>
<dbReference type="InterPro" id="IPR000385">
    <property type="entry name" value="MoaA_NifB_PqqE_Fe-S-bd_CS"/>
</dbReference>
<dbReference type="InterPro" id="IPR010505">
    <property type="entry name" value="MoaA_twitch"/>
</dbReference>
<dbReference type="InterPro" id="IPR050105">
    <property type="entry name" value="MoCo_biosynth_MoaA/MoaC"/>
</dbReference>
<dbReference type="InterPro" id="IPR007197">
    <property type="entry name" value="rSAM"/>
</dbReference>
<dbReference type="NCBIfam" id="TIGR02666">
    <property type="entry name" value="moaA"/>
    <property type="match status" value="1"/>
</dbReference>
<dbReference type="PANTHER" id="PTHR22960:SF0">
    <property type="entry name" value="MOLYBDENUM COFACTOR BIOSYNTHESIS PROTEIN 1"/>
    <property type="match status" value="1"/>
</dbReference>
<dbReference type="PANTHER" id="PTHR22960">
    <property type="entry name" value="MOLYBDOPTERIN COFACTOR SYNTHESIS PROTEIN A"/>
    <property type="match status" value="1"/>
</dbReference>
<dbReference type="Pfam" id="PF13353">
    <property type="entry name" value="Fer4_12"/>
    <property type="match status" value="1"/>
</dbReference>
<dbReference type="Pfam" id="PF06463">
    <property type="entry name" value="Mob_synth_C"/>
    <property type="match status" value="1"/>
</dbReference>
<dbReference type="Pfam" id="PF04055">
    <property type="entry name" value="Radical_SAM"/>
    <property type="match status" value="1"/>
</dbReference>
<dbReference type="SFLD" id="SFLDG01383">
    <property type="entry name" value="cyclic_pyranopterin_phosphate"/>
    <property type="match status" value="1"/>
</dbReference>
<dbReference type="SFLD" id="SFLDG01072">
    <property type="entry name" value="dehydrogenase_like"/>
    <property type="match status" value="1"/>
</dbReference>
<dbReference type="SMART" id="SM00729">
    <property type="entry name" value="Elp3"/>
    <property type="match status" value="1"/>
</dbReference>
<dbReference type="SUPFAM" id="SSF102114">
    <property type="entry name" value="Radical SAM enzymes"/>
    <property type="match status" value="1"/>
</dbReference>
<dbReference type="PROSITE" id="PS01305">
    <property type="entry name" value="MOAA_NIFB_PQQE"/>
    <property type="match status" value="1"/>
</dbReference>
<dbReference type="PROSITE" id="PS51918">
    <property type="entry name" value="RADICAL_SAM"/>
    <property type="match status" value="1"/>
</dbReference>
<feature type="chain" id="PRO_1000139337" description="GTP 3',8-cyclase">
    <location>
        <begin position="1"/>
        <end position="348"/>
    </location>
</feature>
<feature type="domain" description="Radical SAM core" evidence="2">
    <location>
        <begin position="24"/>
        <end position="242"/>
    </location>
</feature>
<feature type="binding site" evidence="1">
    <location>
        <position position="33"/>
    </location>
    <ligand>
        <name>GTP</name>
        <dbReference type="ChEBI" id="CHEBI:37565"/>
    </ligand>
</feature>
<feature type="binding site" evidence="1">
    <location>
        <position position="40"/>
    </location>
    <ligand>
        <name>[4Fe-4S] cluster</name>
        <dbReference type="ChEBI" id="CHEBI:49883"/>
        <label>1</label>
        <note>4Fe-4S-S-AdoMet</note>
    </ligand>
</feature>
<feature type="binding site" evidence="1">
    <location>
        <position position="44"/>
    </location>
    <ligand>
        <name>[4Fe-4S] cluster</name>
        <dbReference type="ChEBI" id="CHEBI:49883"/>
        <label>1</label>
        <note>4Fe-4S-S-AdoMet</note>
    </ligand>
</feature>
<feature type="binding site" evidence="1">
    <location>
        <position position="46"/>
    </location>
    <ligand>
        <name>S-adenosyl-L-methionine</name>
        <dbReference type="ChEBI" id="CHEBI:59789"/>
    </ligand>
</feature>
<feature type="binding site" evidence="1">
    <location>
        <position position="47"/>
    </location>
    <ligand>
        <name>[4Fe-4S] cluster</name>
        <dbReference type="ChEBI" id="CHEBI:49883"/>
        <label>1</label>
        <note>4Fe-4S-S-AdoMet</note>
    </ligand>
</feature>
<feature type="binding site" evidence="1">
    <location>
        <position position="82"/>
    </location>
    <ligand>
        <name>GTP</name>
        <dbReference type="ChEBI" id="CHEBI:37565"/>
    </ligand>
</feature>
<feature type="binding site" evidence="1">
    <location>
        <position position="86"/>
    </location>
    <ligand>
        <name>S-adenosyl-L-methionine</name>
        <dbReference type="ChEBI" id="CHEBI:59789"/>
    </ligand>
</feature>
<feature type="binding site" evidence="1">
    <location>
        <position position="115"/>
    </location>
    <ligand>
        <name>GTP</name>
        <dbReference type="ChEBI" id="CHEBI:37565"/>
    </ligand>
</feature>
<feature type="binding site" evidence="1">
    <location>
        <position position="139"/>
    </location>
    <ligand>
        <name>S-adenosyl-L-methionine</name>
        <dbReference type="ChEBI" id="CHEBI:59789"/>
    </ligand>
</feature>
<feature type="binding site" evidence="1">
    <location>
        <position position="175"/>
    </location>
    <ligand>
        <name>GTP</name>
        <dbReference type="ChEBI" id="CHEBI:37565"/>
    </ligand>
</feature>
<feature type="binding site" evidence="1">
    <location>
        <position position="209"/>
    </location>
    <ligand>
        <name>S-adenosyl-L-methionine</name>
        <dbReference type="ChEBI" id="CHEBI:59789"/>
    </ligand>
</feature>
<feature type="binding site" evidence="1">
    <location>
        <position position="272"/>
    </location>
    <ligand>
        <name>[4Fe-4S] cluster</name>
        <dbReference type="ChEBI" id="CHEBI:49883"/>
        <label>2</label>
        <note>4Fe-4S-substrate</note>
    </ligand>
</feature>
<feature type="binding site" evidence="1">
    <location>
        <position position="275"/>
    </location>
    <ligand>
        <name>[4Fe-4S] cluster</name>
        <dbReference type="ChEBI" id="CHEBI:49883"/>
        <label>2</label>
        <note>4Fe-4S-substrate</note>
    </ligand>
</feature>
<feature type="binding site" evidence="1">
    <location>
        <begin position="277"/>
        <end position="279"/>
    </location>
    <ligand>
        <name>GTP</name>
        <dbReference type="ChEBI" id="CHEBI:37565"/>
    </ligand>
</feature>
<feature type="binding site" evidence="1">
    <location>
        <position position="289"/>
    </location>
    <ligand>
        <name>[4Fe-4S] cluster</name>
        <dbReference type="ChEBI" id="CHEBI:49883"/>
        <label>2</label>
        <note>4Fe-4S-substrate</note>
    </ligand>
</feature>